<keyword id="KW-0030">Aminoacyl-tRNA synthetase</keyword>
<keyword id="KW-0067">ATP-binding</keyword>
<keyword id="KW-0963">Cytoplasm</keyword>
<keyword id="KW-0436">Ligase</keyword>
<keyword id="KW-0460">Magnesium</keyword>
<keyword id="KW-0479">Metal-binding</keyword>
<keyword id="KW-0547">Nucleotide-binding</keyword>
<keyword id="KW-0648">Protein biosynthesis</keyword>
<evidence type="ECO:0000255" key="1">
    <source>
        <dbReference type="HAMAP-Rule" id="MF_00281"/>
    </source>
</evidence>
<sequence>MENIETILRLAEDKILLVQNLKALQEYKVEFLGKNGIVTGELKKLGSLNEQERKEFGLKINKLKDKIQNIIKAKAEILEEQELNFKLAADKIDLTIPARRYKQGSIHPITQCSEELIQVFSQFGFTIENGPNIENDFHNFTALNFEDDHPARQMHDTFYLKSQENNKPLLLRTHTSTVQIRAMKNGKPPFRFIAPGRTYRSDSDMTHTPMFHQIEGLVMDKNINMGHLKYVITTFIKSFFENSNIELRFRPSFFPFTEPSAEVDIRMNKNDKWLEVLGCGMVHPNVLKNVGIDSSEYQGFAFGLGVERFAMLKYNIKDLRQFFEGDMRWLKHYNFGSFDIPNLAGGLTK</sequence>
<accession>Q92I39</accession>
<organism>
    <name type="scientific">Rickettsia conorii (strain ATCC VR-613 / Malish 7)</name>
    <dbReference type="NCBI Taxonomy" id="272944"/>
    <lineage>
        <taxon>Bacteria</taxon>
        <taxon>Pseudomonadati</taxon>
        <taxon>Pseudomonadota</taxon>
        <taxon>Alphaproteobacteria</taxon>
        <taxon>Rickettsiales</taxon>
        <taxon>Rickettsiaceae</taxon>
        <taxon>Rickettsieae</taxon>
        <taxon>Rickettsia</taxon>
        <taxon>spotted fever group</taxon>
    </lineage>
</organism>
<proteinExistence type="inferred from homology"/>
<reference key="1">
    <citation type="journal article" date="2001" name="Science">
        <title>Mechanisms of evolution in Rickettsia conorii and R. prowazekii.</title>
        <authorList>
            <person name="Ogata H."/>
            <person name="Audic S."/>
            <person name="Renesto-Audiffren P."/>
            <person name="Fournier P.-E."/>
            <person name="Barbe V."/>
            <person name="Samson D."/>
            <person name="Roux V."/>
            <person name="Cossart P."/>
            <person name="Weissenbach J."/>
            <person name="Claverie J.-M."/>
            <person name="Raoult D."/>
        </authorList>
    </citation>
    <scope>NUCLEOTIDE SEQUENCE [LARGE SCALE GENOMIC DNA]</scope>
    <source>
        <strain>ATCC VR-613 / Malish 7</strain>
    </source>
</reference>
<dbReference type="EC" id="6.1.1.20" evidence="1"/>
<dbReference type="EMBL" id="AE006914">
    <property type="protein sequence ID" value="AAL03119.1"/>
    <property type="molecule type" value="Genomic_DNA"/>
</dbReference>
<dbReference type="PIR" id="E97772">
    <property type="entry name" value="E97772"/>
</dbReference>
<dbReference type="RefSeq" id="WP_010977215.1">
    <property type="nucleotide sequence ID" value="NC_003103.1"/>
</dbReference>
<dbReference type="SMR" id="Q92I39"/>
<dbReference type="GeneID" id="928775"/>
<dbReference type="KEGG" id="rco:RC0581"/>
<dbReference type="HOGENOM" id="CLU_025086_0_1_5"/>
<dbReference type="Proteomes" id="UP000000816">
    <property type="component" value="Chromosome"/>
</dbReference>
<dbReference type="GO" id="GO:0005737">
    <property type="term" value="C:cytoplasm"/>
    <property type="evidence" value="ECO:0007669"/>
    <property type="project" value="UniProtKB-SubCell"/>
</dbReference>
<dbReference type="GO" id="GO:0005524">
    <property type="term" value="F:ATP binding"/>
    <property type="evidence" value="ECO:0007669"/>
    <property type="project" value="UniProtKB-UniRule"/>
</dbReference>
<dbReference type="GO" id="GO:0000287">
    <property type="term" value="F:magnesium ion binding"/>
    <property type="evidence" value="ECO:0007669"/>
    <property type="project" value="UniProtKB-UniRule"/>
</dbReference>
<dbReference type="GO" id="GO:0004826">
    <property type="term" value="F:phenylalanine-tRNA ligase activity"/>
    <property type="evidence" value="ECO:0007669"/>
    <property type="project" value="UniProtKB-UniRule"/>
</dbReference>
<dbReference type="GO" id="GO:0000049">
    <property type="term" value="F:tRNA binding"/>
    <property type="evidence" value="ECO:0007669"/>
    <property type="project" value="InterPro"/>
</dbReference>
<dbReference type="GO" id="GO:0006432">
    <property type="term" value="P:phenylalanyl-tRNA aminoacylation"/>
    <property type="evidence" value="ECO:0007669"/>
    <property type="project" value="UniProtKB-UniRule"/>
</dbReference>
<dbReference type="CDD" id="cd00496">
    <property type="entry name" value="PheRS_alpha_core"/>
    <property type="match status" value="1"/>
</dbReference>
<dbReference type="FunFam" id="3.30.930.10:FF:000003">
    <property type="entry name" value="Phenylalanine--tRNA ligase alpha subunit"/>
    <property type="match status" value="1"/>
</dbReference>
<dbReference type="Gene3D" id="3.30.930.10">
    <property type="entry name" value="Bira Bifunctional Protein, Domain 2"/>
    <property type="match status" value="1"/>
</dbReference>
<dbReference type="HAMAP" id="MF_00281">
    <property type="entry name" value="Phe_tRNA_synth_alpha1"/>
    <property type="match status" value="1"/>
</dbReference>
<dbReference type="InterPro" id="IPR006195">
    <property type="entry name" value="aa-tRNA-synth_II"/>
</dbReference>
<dbReference type="InterPro" id="IPR045864">
    <property type="entry name" value="aa-tRNA-synth_II/BPL/LPL"/>
</dbReference>
<dbReference type="InterPro" id="IPR004529">
    <property type="entry name" value="Phe-tRNA-synth_IIc_asu"/>
</dbReference>
<dbReference type="InterPro" id="IPR004188">
    <property type="entry name" value="Phe-tRNA_ligase_II_N"/>
</dbReference>
<dbReference type="InterPro" id="IPR022911">
    <property type="entry name" value="Phe_tRNA_ligase_alpha1_bac"/>
</dbReference>
<dbReference type="InterPro" id="IPR002319">
    <property type="entry name" value="Phenylalanyl-tRNA_Synthase"/>
</dbReference>
<dbReference type="InterPro" id="IPR010978">
    <property type="entry name" value="tRNA-bd_arm"/>
</dbReference>
<dbReference type="NCBIfam" id="TIGR00468">
    <property type="entry name" value="pheS"/>
    <property type="match status" value="1"/>
</dbReference>
<dbReference type="PANTHER" id="PTHR11538:SF41">
    <property type="entry name" value="PHENYLALANINE--TRNA LIGASE, MITOCHONDRIAL"/>
    <property type="match status" value="1"/>
</dbReference>
<dbReference type="PANTHER" id="PTHR11538">
    <property type="entry name" value="PHENYLALANYL-TRNA SYNTHETASE"/>
    <property type="match status" value="1"/>
</dbReference>
<dbReference type="Pfam" id="PF02912">
    <property type="entry name" value="Phe_tRNA-synt_N"/>
    <property type="match status" value="1"/>
</dbReference>
<dbReference type="Pfam" id="PF01409">
    <property type="entry name" value="tRNA-synt_2d"/>
    <property type="match status" value="1"/>
</dbReference>
<dbReference type="SUPFAM" id="SSF55681">
    <property type="entry name" value="Class II aaRS and biotin synthetases"/>
    <property type="match status" value="1"/>
</dbReference>
<dbReference type="SUPFAM" id="SSF46589">
    <property type="entry name" value="tRNA-binding arm"/>
    <property type="match status" value="1"/>
</dbReference>
<dbReference type="PROSITE" id="PS50862">
    <property type="entry name" value="AA_TRNA_LIGASE_II"/>
    <property type="match status" value="1"/>
</dbReference>
<feature type="chain" id="PRO_0000126751" description="Phenylalanine--tRNA ligase alpha subunit">
    <location>
        <begin position="1"/>
        <end position="349"/>
    </location>
</feature>
<feature type="binding site" evidence="1">
    <location>
        <position position="258"/>
    </location>
    <ligand>
        <name>Mg(2+)</name>
        <dbReference type="ChEBI" id="CHEBI:18420"/>
        <note>shared with beta subunit</note>
    </ligand>
</feature>
<name>SYFA_RICCN</name>
<protein>
    <recommendedName>
        <fullName evidence="1">Phenylalanine--tRNA ligase alpha subunit</fullName>
        <ecNumber evidence="1">6.1.1.20</ecNumber>
    </recommendedName>
    <alternativeName>
        <fullName evidence="1">Phenylalanyl-tRNA synthetase alpha subunit</fullName>
        <shortName evidence="1">PheRS</shortName>
    </alternativeName>
</protein>
<comment type="catalytic activity">
    <reaction evidence="1">
        <text>tRNA(Phe) + L-phenylalanine + ATP = L-phenylalanyl-tRNA(Phe) + AMP + diphosphate + H(+)</text>
        <dbReference type="Rhea" id="RHEA:19413"/>
        <dbReference type="Rhea" id="RHEA-COMP:9668"/>
        <dbReference type="Rhea" id="RHEA-COMP:9699"/>
        <dbReference type="ChEBI" id="CHEBI:15378"/>
        <dbReference type="ChEBI" id="CHEBI:30616"/>
        <dbReference type="ChEBI" id="CHEBI:33019"/>
        <dbReference type="ChEBI" id="CHEBI:58095"/>
        <dbReference type="ChEBI" id="CHEBI:78442"/>
        <dbReference type="ChEBI" id="CHEBI:78531"/>
        <dbReference type="ChEBI" id="CHEBI:456215"/>
        <dbReference type="EC" id="6.1.1.20"/>
    </reaction>
</comment>
<comment type="cofactor">
    <cofactor evidence="1">
        <name>Mg(2+)</name>
        <dbReference type="ChEBI" id="CHEBI:18420"/>
    </cofactor>
    <text evidence="1">Binds 2 magnesium ions per tetramer.</text>
</comment>
<comment type="subunit">
    <text evidence="1">Tetramer of two alpha and two beta subunits.</text>
</comment>
<comment type="subcellular location">
    <subcellularLocation>
        <location evidence="1">Cytoplasm</location>
    </subcellularLocation>
</comment>
<comment type="similarity">
    <text evidence="1">Belongs to the class-II aminoacyl-tRNA synthetase family. Phe-tRNA synthetase alpha subunit type 1 subfamily.</text>
</comment>
<gene>
    <name evidence="1" type="primary">pheS</name>
    <name type="ordered locus">RC0581</name>
</gene>